<protein>
    <recommendedName>
        <fullName evidence="2">Small ribosomal subunit protein mS23</fullName>
    </recommendedName>
    <alternativeName>
        <fullName>37S ribosomal protein S25, mitochondrial</fullName>
    </alternativeName>
</protein>
<gene>
    <name type="primary">rsm25</name>
    <name type="ORF">SS1G_03932</name>
</gene>
<name>RT25_SCLS1</name>
<comment type="subunit">
    <text evidence="1">Component of the mitochondrial small ribosomal subunit.</text>
</comment>
<comment type="subcellular location">
    <subcellularLocation>
        <location evidence="1">Mitochondrion</location>
    </subcellularLocation>
</comment>
<comment type="similarity">
    <text evidence="2">Belongs to the mitochondrion-specific ribosomal protein mS23 family.</text>
</comment>
<dbReference type="EMBL" id="CH476624">
    <property type="protein sequence ID" value="EDO01457.1"/>
    <property type="molecule type" value="Genomic_DNA"/>
</dbReference>
<dbReference type="RefSeq" id="XP_001595842.1">
    <property type="nucleotide sequence ID" value="XM_001595792.1"/>
</dbReference>
<dbReference type="SMR" id="A7EF41"/>
<dbReference type="FunCoup" id="A7EF41">
    <property type="interactions" value="106"/>
</dbReference>
<dbReference type="STRING" id="665079.A7EF41"/>
<dbReference type="EnsemblFungi" id="EDO01457">
    <property type="protein sequence ID" value="EDO01457"/>
    <property type="gene ID" value="SS1G_03932"/>
</dbReference>
<dbReference type="GeneID" id="5492067"/>
<dbReference type="KEGG" id="ssl:SS1G_03932"/>
<dbReference type="eggNOG" id="ENOG502RZQQ">
    <property type="taxonomic scope" value="Eukaryota"/>
</dbReference>
<dbReference type="HOGENOM" id="CLU_081350_0_0_1"/>
<dbReference type="InParanoid" id="A7EF41"/>
<dbReference type="OMA" id="EDKSWES"/>
<dbReference type="Proteomes" id="UP000001312">
    <property type="component" value="Unassembled WGS sequence"/>
</dbReference>
<dbReference type="GO" id="GO:0005763">
    <property type="term" value="C:mitochondrial small ribosomal subunit"/>
    <property type="evidence" value="ECO:0000318"/>
    <property type="project" value="GO_Central"/>
</dbReference>
<dbReference type="GO" id="GO:0003735">
    <property type="term" value="F:structural constituent of ribosome"/>
    <property type="evidence" value="ECO:0000318"/>
    <property type="project" value="GO_Central"/>
</dbReference>
<dbReference type="CDD" id="cd23701">
    <property type="entry name" value="At1g26750"/>
    <property type="match status" value="1"/>
</dbReference>
<dbReference type="InterPro" id="IPR016939">
    <property type="entry name" value="Ribosomal_mS23_fun"/>
</dbReference>
<dbReference type="PANTHER" id="PTHR37799">
    <property type="entry name" value="37S RIBOSOMAL PROTEIN S25, MITOCHONDRIAL"/>
    <property type="match status" value="1"/>
</dbReference>
<dbReference type="PANTHER" id="PTHR37799:SF1">
    <property type="entry name" value="SMALL RIBOSOMAL SUBUNIT PROTEIN MS23"/>
    <property type="match status" value="1"/>
</dbReference>
<dbReference type="Pfam" id="PF13741">
    <property type="entry name" value="MRP-S25"/>
    <property type="match status" value="2"/>
</dbReference>
<accession>A7EF41</accession>
<sequence length="209" mass="23814">MRGLNLKPSRVYQTAAALLESESISQAPPWYKTIGSVPPSEILTRTQPVQHRGSNGRPRTKKASKLFKPQTIVYEEDRIRQEFFRDHPWELARPRIVLENDGRDGQRCDWTRKEFYALRQEEEIERRIAKEEAEYVGAYFHKGALEVGMELEDKSYEDWKAWATKEVEAANLLKQGAYTGVGAESEDADVLDEAAEADEGVEEPATVVA</sequence>
<keyword id="KW-0496">Mitochondrion</keyword>
<keyword id="KW-1185">Reference proteome</keyword>
<keyword id="KW-0687">Ribonucleoprotein</keyword>
<keyword id="KW-0689">Ribosomal protein</keyword>
<reference key="1">
    <citation type="journal article" date="2011" name="PLoS Genet.">
        <title>Genomic analysis of the necrotrophic fungal pathogens Sclerotinia sclerotiorum and Botrytis cinerea.</title>
        <authorList>
            <person name="Amselem J."/>
            <person name="Cuomo C.A."/>
            <person name="van Kan J.A.L."/>
            <person name="Viaud M."/>
            <person name="Benito E.P."/>
            <person name="Couloux A."/>
            <person name="Coutinho P.M."/>
            <person name="de Vries R.P."/>
            <person name="Dyer P.S."/>
            <person name="Fillinger S."/>
            <person name="Fournier E."/>
            <person name="Gout L."/>
            <person name="Hahn M."/>
            <person name="Kohn L."/>
            <person name="Lapalu N."/>
            <person name="Plummer K.M."/>
            <person name="Pradier J.-M."/>
            <person name="Quevillon E."/>
            <person name="Sharon A."/>
            <person name="Simon A."/>
            <person name="ten Have A."/>
            <person name="Tudzynski B."/>
            <person name="Tudzynski P."/>
            <person name="Wincker P."/>
            <person name="Andrew M."/>
            <person name="Anthouard V."/>
            <person name="Beever R.E."/>
            <person name="Beffa R."/>
            <person name="Benoit I."/>
            <person name="Bouzid O."/>
            <person name="Brault B."/>
            <person name="Chen Z."/>
            <person name="Choquer M."/>
            <person name="Collemare J."/>
            <person name="Cotton P."/>
            <person name="Danchin E.G."/>
            <person name="Da Silva C."/>
            <person name="Gautier A."/>
            <person name="Giraud C."/>
            <person name="Giraud T."/>
            <person name="Gonzalez C."/>
            <person name="Grossetete S."/>
            <person name="Gueldener U."/>
            <person name="Henrissat B."/>
            <person name="Howlett B.J."/>
            <person name="Kodira C."/>
            <person name="Kretschmer M."/>
            <person name="Lappartient A."/>
            <person name="Leroch M."/>
            <person name="Levis C."/>
            <person name="Mauceli E."/>
            <person name="Neuveglise C."/>
            <person name="Oeser B."/>
            <person name="Pearson M."/>
            <person name="Poulain J."/>
            <person name="Poussereau N."/>
            <person name="Quesneville H."/>
            <person name="Rascle C."/>
            <person name="Schumacher J."/>
            <person name="Segurens B."/>
            <person name="Sexton A."/>
            <person name="Silva E."/>
            <person name="Sirven C."/>
            <person name="Soanes D.M."/>
            <person name="Talbot N.J."/>
            <person name="Templeton M."/>
            <person name="Yandava C."/>
            <person name="Yarden O."/>
            <person name="Zeng Q."/>
            <person name="Rollins J.A."/>
            <person name="Lebrun M.-H."/>
            <person name="Dickman M."/>
        </authorList>
    </citation>
    <scope>NUCLEOTIDE SEQUENCE [LARGE SCALE GENOMIC DNA]</scope>
    <source>
        <strain>ATCC 18683 / 1980 / Ss-1</strain>
    </source>
</reference>
<evidence type="ECO:0000250" key="1"/>
<evidence type="ECO:0000305" key="2"/>
<organism>
    <name type="scientific">Sclerotinia sclerotiorum (strain ATCC 18683 / 1980 / Ss-1)</name>
    <name type="common">White mold</name>
    <name type="synonym">Whetzelinia sclerotiorum</name>
    <dbReference type="NCBI Taxonomy" id="665079"/>
    <lineage>
        <taxon>Eukaryota</taxon>
        <taxon>Fungi</taxon>
        <taxon>Dikarya</taxon>
        <taxon>Ascomycota</taxon>
        <taxon>Pezizomycotina</taxon>
        <taxon>Leotiomycetes</taxon>
        <taxon>Helotiales</taxon>
        <taxon>Sclerotiniaceae</taxon>
        <taxon>Sclerotinia</taxon>
    </lineage>
</organism>
<proteinExistence type="inferred from homology"/>
<feature type="chain" id="PRO_0000343561" description="Small ribosomal subunit protein mS23">
    <location>
        <begin position="1"/>
        <end position="209"/>
    </location>
</feature>